<name>TGB2_PCV87</name>
<accession>Q08315</accession>
<organism>
    <name type="scientific">Peanut clump virus (isolate 87/TGTA2)</name>
    <name type="common">PCV</name>
    <dbReference type="NCBI Taxonomy" id="652837"/>
    <lineage>
        <taxon>Viruses</taxon>
        <taxon>Riboviria</taxon>
        <taxon>Orthornavirae</taxon>
        <taxon>Kitrinoviricota</taxon>
        <taxon>Alsuviricetes</taxon>
        <taxon>Martellivirales</taxon>
        <taxon>Virgaviridae</taxon>
        <taxon>Pecluvirus</taxon>
        <taxon>Peanut clump virus</taxon>
    </lineage>
</organism>
<protein>
    <recommendedName>
        <fullName>Movement protein TGB2</fullName>
    </recommendedName>
    <alternativeName>
        <fullName>P14</fullName>
    </alternativeName>
    <alternativeName>
        <fullName>Triple gene block 2 protein</fullName>
        <shortName>TGBp2</shortName>
    </alternativeName>
</protein>
<feature type="chain" id="PRO_0000409150" description="Movement protein TGB2">
    <location>
        <begin position="1"/>
        <end position="122"/>
    </location>
</feature>
<feature type="topological domain" description="Cytoplasmic" evidence="3">
    <location>
        <begin position="1"/>
        <end position="12"/>
    </location>
</feature>
<feature type="transmembrane region" description="Helical" evidence="3">
    <location>
        <begin position="13"/>
        <end position="33"/>
    </location>
</feature>
<feature type="topological domain" description="Lumenal" evidence="3">
    <location>
        <begin position="34"/>
        <end position="76"/>
    </location>
</feature>
<feature type="transmembrane region" description="Helical" evidence="3">
    <location>
        <begin position="77"/>
        <end position="97"/>
    </location>
</feature>
<feature type="topological domain" description="Cytoplasmic" evidence="3">
    <location>
        <begin position="98"/>
        <end position="122"/>
    </location>
</feature>
<reference key="1">
    <citation type="journal article" date="1993" name="Virology">
        <title>Nucleotide sequence and genetic organization of peanut clump virus RNA 2 and partial characterization of deleted forms.</title>
        <authorList>
            <person name="Manohar S.K."/>
            <person name="Guilley H."/>
            <person name="Dollet M."/>
            <person name="Richards K."/>
            <person name="Jonard G."/>
        </authorList>
    </citation>
    <scope>NUCLEOTIDE SEQUENCE [GENOMIC RNA]</scope>
</reference>
<reference key="2">
    <citation type="journal article" date="1998" name="Virology">
        <title>Identification of genes involved in replication and movement of peanut clump virus.</title>
        <authorList>
            <person name="Herzog E."/>
            <person name="Hemmer O."/>
            <person name="Hauser S."/>
            <person name="Meyer G."/>
            <person name="Bouzoubaa S."/>
            <person name="Fritsch C."/>
        </authorList>
    </citation>
    <scope>FUNCTION</scope>
</reference>
<dbReference type="EMBL" id="L07269">
    <property type="protein sequence ID" value="AAA17439.1"/>
    <property type="molecule type" value="Unassigned_DNA"/>
</dbReference>
<dbReference type="RefSeq" id="NP_620031.1">
    <property type="nucleotide sequence ID" value="NC_003668.1"/>
</dbReference>
<dbReference type="GeneID" id="991041"/>
<dbReference type="KEGG" id="vg:991041"/>
<dbReference type="Proteomes" id="UP000001668">
    <property type="component" value="Genome"/>
</dbReference>
<dbReference type="GO" id="GO:0044167">
    <property type="term" value="C:host cell endoplasmic reticulum membrane"/>
    <property type="evidence" value="ECO:0007669"/>
    <property type="project" value="UniProtKB-SubCell"/>
</dbReference>
<dbReference type="GO" id="GO:0044219">
    <property type="term" value="C:host cell plasmodesma"/>
    <property type="evidence" value="ECO:0007669"/>
    <property type="project" value="UniProtKB-SubCell"/>
</dbReference>
<dbReference type="GO" id="GO:0044163">
    <property type="term" value="C:host cytoskeleton"/>
    <property type="evidence" value="ECO:0007669"/>
    <property type="project" value="UniProtKB-SubCell"/>
</dbReference>
<dbReference type="GO" id="GO:0016020">
    <property type="term" value="C:membrane"/>
    <property type="evidence" value="ECO:0007669"/>
    <property type="project" value="UniProtKB-KW"/>
</dbReference>
<dbReference type="GO" id="GO:0046740">
    <property type="term" value="P:transport of virus in host, cell to cell"/>
    <property type="evidence" value="ECO:0007669"/>
    <property type="project" value="UniProtKB-KW"/>
</dbReference>
<dbReference type="InterPro" id="IPR001896">
    <property type="entry name" value="Plant_vir_prot"/>
</dbReference>
<dbReference type="Pfam" id="PF01307">
    <property type="entry name" value="Plant_vir_prot"/>
    <property type="match status" value="1"/>
</dbReference>
<organismHost>
    <name type="scientific">Arachis hypogaea</name>
    <name type="common">Peanut</name>
    <dbReference type="NCBI Taxonomy" id="3818"/>
</organismHost>
<organismHost>
    <name type="scientific">Setaria italica</name>
    <name type="common">Foxtail millet</name>
    <name type="synonym">Panicum italicum</name>
    <dbReference type="NCBI Taxonomy" id="4555"/>
</organismHost>
<organismHost>
    <name type="scientific">Sorghum arundinaceum</name>
    <dbReference type="NCBI Taxonomy" id="91525"/>
</organismHost>
<organismHost>
    <name type="scientific">Sorghum bicolor</name>
    <name type="common">Sorghum</name>
    <name type="synonym">Sorghum vulgare</name>
    <dbReference type="NCBI Taxonomy" id="4558"/>
</organismHost>
<evidence type="ECO:0000250" key="1">
    <source>
        <dbReference type="UniProtKB" id="P04869"/>
    </source>
</evidence>
<evidence type="ECO:0000250" key="2">
    <source>
        <dbReference type="UniProtKB" id="Q9IV52"/>
    </source>
</evidence>
<evidence type="ECO:0000250" key="3">
    <source>
        <dbReference type="UniProtKB" id="Q9IV53"/>
    </source>
</evidence>
<evidence type="ECO:0000269" key="4">
    <source>
    </source>
</evidence>
<evidence type="ECO:0000305" key="5"/>
<proteinExistence type="inferred from homology"/>
<comment type="function">
    <text evidence="1 4">Participates in the transport of viral genome to neighboring plant cells directly through plasmodesmata, without any budding (PubMed:9721240). TGBp2 and TGBp3 are necessary for intracellular delivery of TGBp1-containing vRNPs to plasmodesmata (By similarity). Can gate plasmodesmata and increase their size exclusion limit (By similarity). To a lesser extent than TGB3, induces host actin cytoskeleton network thickening, which probably plays a major role in virus cell-to-cell movement (By similarity).</text>
</comment>
<comment type="subunit">
    <text evidence="1">Interacts with movement protein TGB3. TGB1-TGB3-TGB2 complex formation is enhanced by ATP hydrolysis.</text>
</comment>
<comment type="subcellular location">
    <subcellularLocation>
        <location evidence="1">Host cell junction</location>
        <location evidence="1">Host plasmodesma</location>
    </subcellularLocation>
    <subcellularLocation>
        <location evidence="1">Host endoplasmic reticulum membrane</location>
        <topology evidence="3">Multi-pass membrane protein</topology>
    </subcellularLocation>
    <subcellularLocation>
        <location evidence="1">Host cytoplasm</location>
        <location evidence="1">Host cytoskeleton</location>
    </subcellularLocation>
    <text evidence="1 2">Probably localizes to plasmodesmata-associated membrane compartments called peripheral membrane bodies (PMBs). Associates with host actin filaments, possibly for the intracellular transport to the plasmodesmata (By similarity). The viral replication sites are located at the host chloroplast membrane (By similarity).</text>
</comment>
<comment type="similarity">
    <text evidence="5">Belongs to the virgaviridae/benyvirus TGB2 movement protein family.</text>
</comment>
<keyword id="KW-1031">Host cell junction</keyword>
<keyword id="KW-1035">Host cytoplasm</keyword>
<keyword id="KW-1037">Host cytoskeleton</keyword>
<keyword id="KW-1038">Host endoplasmic reticulum</keyword>
<keyword id="KW-1043">Host membrane</keyword>
<keyword id="KW-0472">Membrane</keyword>
<keyword id="KW-1185">Reference proteome</keyword>
<keyword id="KW-0812">Transmembrane</keyword>
<keyword id="KW-1133">Transmembrane helix</keyword>
<keyword id="KW-0813">Transport</keyword>
<keyword id="KW-0916">Viral movement protein</keyword>
<sequence>MVKSTVPTRPNKYWPGVVAIGLVSLFIFLSVSNQKHSTTSGDNIHKFSNGGTYRDGSKCITYNRNSPLAYNGSSSNNTLFWLCLLGLSMVWIAYCGYKSLSGQWHSCQHDKNERNFLFECFE</sequence>